<name>CEMA_HELAN</name>
<sequence length="229" mass="26968">MAKKKAFTPLLYLVSIVFLPWWISLLFQKSLESWVTNWWNTRQSETFLNDIEEKSILEKFIELEELLFLEEMIKEYSETHLQNLRIGIHKETIQLIKIQNEGRIHTILHFSTNIICFIILSGYSILGNKELVILNSWAQEFLYNLSDTIKAFSLLLLTDLCIGFHSPHGWELMIGFVYKDFGFVHNDQIISGLVSTFPVILDTILKYWIFRYLNRVSPSLVVIYHSMND</sequence>
<geneLocation type="chloroplast"/>
<dbReference type="EMBL" id="DQ383815">
    <property type="protein sequence ID" value="ABD47158.1"/>
    <property type="molecule type" value="Genomic_DNA"/>
</dbReference>
<dbReference type="RefSeq" id="YP_588129.1">
    <property type="nucleotide sequence ID" value="NC_007977.1"/>
</dbReference>
<dbReference type="EnsemblPlants" id="mRNA:HanXRQr2_Chr02g0061581">
    <property type="protein sequence ID" value="CDS:HanXRQr2_Chr02g0061581.1"/>
    <property type="gene ID" value="HanXRQr2_Chr02g0061581"/>
</dbReference>
<dbReference type="GeneID" id="4055660"/>
<dbReference type="Gramene" id="mRNA:HanXRQr2_Chr02g0061581">
    <property type="protein sequence ID" value="CDS:HanXRQr2_Chr02g0061581.1"/>
    <property type="gene ID" value="HanXRQr2_Chr02g0061581"/>
</dbReference>
<dbReference type="KEGG" id="han:4055660"/>
<dbReference type="OMA" id="FRYLNHI"/>
<dbReference type="OrthoDB" id="993at2759"/>
<dbReference type="GO" id="GO:0009706">
    <property type="term" value="C:chloroplast inner membrane"/>
    <property type="evidence" value="ECO:0007669"/>
    <property type="project" value="UniProtKB-SubCell"/>
</dbReference>
<dbReference type="GO" id="GO:0015297">
    <property type="term" value="F:antiporter activity"/>
    <property type="evidence" value="ECO:0007669"/>
    <property type="project" value="UniProtKB-KW"/>
</dbReference>
<dbReference type="GO" id="GO:0015078">
    <property type="term" value="F:proton transmembrane transporter activity"/>
    <property type="evidence" value="ECO:0007669"/>
    <property type="project" value="UniProtKB-UniRule"/>
</dbReference>
<dbReference type="GO" id="GO:0006813">
    <property type="term" value="P:potassium ion transport"/>
    <property type="evidence" value="ECO:0007669"/>
    <property type="project" value="UniProtKB-UniRule"/>
</dbReference>
<dbReference type="HAMAP" id="MF_01308">
    <property type="entry name" value="CemA_PxcA"/>
    <property type="match status" value="1"/>
</dbReference>
<dbReference type="InterPro" id="IPR004282">
    <property type="entry name" value="CemA"/>
</dbReference>
<dbReference type="PANTHER" id="PTHR33650:SF2">
    <property type="entry name" value="CHLOROPLAST ENVELOPE MEMBRANE PROTEIN"/>
    <property type="match status" value="1"/>
</dbReference>
<dbReference type="PANTHER" id="PTHR33650">
    <property type="entry name" value="CHLOROPLAST ENVELOPE MEMBRANE PROTEIN-RELATED"/>
    <property type="match status" value="1"/>
</dbReference>
<dbReference type="Pfam" id="PF03040">
    <property type="entry name" value="CemA"/>
    <property type="match status" value="1"/>
</dbReference>
<keyword id="KW-0050">Antiport</keyword>
<keyword id="KW-0150">Chloroplast</keyword>
<keyword id="KW-0375">Hydrogen ion transport</keyword>
<keyword id="KW-0406">Ion transport</keyword>
<keyword id="KW-0472">Membrane</keyword>
<keyword id="KW-0934">Plastid</keyword>
<keyword id="KW-1001">Plastid inner membrane</keyword>
<keyword id="KW-0630">Potassium</keyword>
<keyword id="KW-0633">Potassium transport</keyword>
<keyword id="KW-0812">Transmembrane</keyword>
<keyword id="KW-1133">Transmembrane helix</keyword>
<keyword id="KW-0813">Transport</keyword>
<reference key="1">
    <citation type="submission" date="2006-01" db="EMBL/GenBank/DDBJ databases">
        <title>A comparison of the first two published chloroplast genomes in Asteraceae: Lactuca and Helianthus.</title>
        <authorList>
            <person name="Timme R.E."/>
            <person name="Kuehl J.V."/>
            <person name="Boore J.L."/>
            <person name="Jansen R.K."/>
        </authorList>
    </citation>
    <scope>NUCLEOTIDE SEQUENCE [LARGE SCALE GENOMIC DNA]</scope>
    <source>
        <strain>cv. HA383</strain>
    </source>
</reference>
<organism>
    <name type="scientific">Helianthus annuus</name>
    <name type="common">Common sunflower</name>
    <dbReference type="NCBI Taxonomy" id="4232"/>
    <lineage>
        <taxon>Eukaryota</taxon>
        <taxon>Viridiplantae</taxon>
        <taxon>Streptophyta</taxon>
        <taxon>Embryophyta</taxon>
        <taxon>Tracheophyta</taxon>
        <taxon>Spermatophyta</taxon>
        <taxon>Magnoliopsida</taxon>
        <taxon>eudicotyledons</taxon>
        <taxon>Gunneridae</taxon>
        <taxon>Pentapetalae</taxon>
        <taxon>asterids</taxon>
        <taxon>campanulids</taxon>
        <taxon>Asterales</taxon>
        <taxon>Asteraceae</taxon>
        <taxon>Asteroideae</taxon>
        <taxon>Heliantheae alliance</taxon>
        <taxon>Heliantheae</taxon>
        <taxon>Helianthus</taxon>
    </lineage>
</organism>
<proteinExistence type="inferred from homology"/>
<accession>Q1KXU7</accession>
<gene>
    <name evidence="1" type="primary">cemA</name>
</gene>
<comment type="function">
    <text evidence="1">Contributes to K(+)/H(+) antiport activity by supporting proton efflux to control proton extrusion and homeostasis in chloroplasts in a light-dependent manner to modulate photosynthesis. Prevents excessive induction of non-photochemical quenching (NPQ) under continuous-light conditions. Indirectly promotes efficient inorganic carbon uptake into chloroplasts.</text>
</comment>
<comment type="catalytic activity">
    <reaction evidence="1">
        <text>K(+)(in) + H(+)(out) = K(+)(out) + H(+)(in)</text>
        <dbReference type="Rhea" id="RHEA:29467"/>
        <dbReference type="ChEBI" id="CHEBI:15378"/>
        <dbReference type="ChEBI" id="CHEBI:29103"/>
    </reaction>
</comment>
<comment type="subcellular location">
    <subcellularLocation>
        <location evidence="1">Plastid</location>
        <location evidence="1">Chloroplast inner membrane</location>
        <topology evidence="1">Multi-pass membrane protein</topology>
    </subcellularLocation>
</comment>
<comment type="similarity">
    <text evidence="1 2">Belongs to the CemA family.</text>
</comment>
<protein>
    <recommendedName>
        <fullName evidence="1">Potassium/proton antiporter CemA</fullName>
    </recommendedName>
    <alternativeName>
        <fullName evidence="1">Chloroplast envelope membrane protein A</fullName>
        <shortName evidence="1">CemA</shortName>
    </alternativeName>
</protein>
<evidence type="ECO:0000255" key="1">
    <source>
        <dbReference type="HAMAP-Rule" id="MF_01308"/>
    </source>
</evidence>
<evidence type="ECO:0000305" key="2"/>
<feature type="chain" id="PRO_0000275240" description="Potassium/proton antiporter CemA">
    <location>
        <begin position="1"/>
        <end position="229"/>
    </location>
</feature>
<feature type="transmembrane region" description="Helical" evidence="1">
    <location>
        <begin position="7"/>
        <end position="27"/>
    </location>
</feature>
<feature type="transmembrane region" description="Helical" evidence="1">
    <location>
        <begin position="107"/>
        <end position="127"/>
    </location>
</feature>
<feature type="transmembrane region" description="Helical" evidence="1">
    <location>
        <begin position="189"/>
        <end position="209"/>
    </location>
</feature>